<sequence length="222" mass="25063">MSAVINKEVLLSKIKEALRNGKPRRFRQSVELIVVLRDVDLNKPENRINLLVELPHPPKPNKVAAFAHGAFETQAKNAGVDAIITRDQIESLAGNKRAIRKLAKQYDFFIAPPDLMPLLGRVIGPIFGPRGKMPEVAPPNVDIKALVERLKRSVRVRLRNEAVVKVRVGSETQKPEEILENILVILEELNRRFPLRQHLRGIYIKKTMGPPVVARALEVLVR</sequence>
<keyword id="KW-0678">Repressor</keyword>
<keyword id="KW-0687">Ribonucleoprotein</keyword>
<keyword id="KW-0689">Ribosomal protein</keyword>
<keyword id="KW-0694">RNA-binding</keyword>
<keyword id="KW-0699">rRNA-binding</keyword>
<keyword id="KW-0810">Translation regulation</keyword>
<keyword id="KW-0820">tRNA-binding</keyword>
<comment type="function">
    <text evidence="1">Binds directly to 23S rRNA. Probably involved in E site tRNA release.</text>
</comment>
<comment type="function">
    <text evidence="1">Protein L1 is also a translational repressor protein, it controls the translation of its operon by binding to its mRNA.</text>
</comment>
<comment type="subunit">
    <text evidence="1">Part of the 50S ribosomal subunit.</text>
</comment>
<comment type="similarity">
    <text evidence="1">Belongs to the universal ribosomal protein uL1 family.</text>
</comment>
<dbReference type="EMBL" id="CP000504">
    <property type="protein sequence ID" value="ABL87643.1"/>
    <property type="molecule type" value="Genomic_DNA"/>
</dbReference>
<dbReference type="RefSeq" id="WP_011762220.1">
    <property type="nucleotide sequence ID" value="NC_008701.1"/>
</dbReference>
<dbReference type="SMR" id="A1RRR1"/>
<dbReference type="STRING" id="384616.Pisl_0465"/>
<dbReference type="GeneID" id="4618299"/>
<dbReference type="KEGG" id="pis:Pisl_0465"/>
<dbReference type="eggNOG" id="arCOG04289">
    <property type="taxonomic scope" value="Archaea"/>
</dbReference>
<dbReference type="HOGENOM" id="CLU_062853_4_0_2"/>
<dbReference type="OrthoDB" id="10382at2157"/>
<dbReference type="Proteomes" id="UP000002595">
    <property type="component" value="Chromosome"/>
</dbReference>
<dbReference type="GO" id="GO:0015934">
    <property type="term" value="C:large ribosomal subunit"/>
    <property type="evidence" value="ECO:0007669"/>
    <property type="project" value="InterPro"/>
</dbReference>
<dbReference type="GO" id="GO:0019843">
    <property type="term" value="F:rRNA binding"/>
    <property type="evidence" value="ECO:0007669"/>
    <property type="project" value="UniProtKB-UniRule"/>
</dbReference>
<dbReference type="GO" id="GO:0003735">
    <property type="term" value="F:structural constituent of ribosome"/>
    <property type="evidence" value="ECO:0007669"/>
    <property type="project" value="InterPro"/>
</dbReference>
<dbReference type="GO" id="GO:0000049">
    <property type="term" value="F:tRNA binding"/>
    <property type="evidence" value="ECO:0007669"/>
    <property type="project" value="UniProtKB-KW"/>
</dbReference>
<dbReference type="GO" id="GO:0006417">
    <property type="term" value="P:regulation of translation"/>
    <property type="evidence" value="ECO:0007669"/>
    <property type="project" value="UniProtKB-KW"/>
</dbReference>
<dbReference type="GO" id="GO:0006412">
    <property type="term" value="P:translation"/>
    <property type="evidence" value="ECO:0007669"/>
    <property type="project" value="UniProtKB-UniRule"/>
</dbReference>
<dbReference type="CDD" id="cd00403">
    <property type="entry name" value="Ribosomal_L1"/>
    <property type="match status" value="1"/>
</dbReference>
<dbReference type="FunFam" id="3.40.50.790:FF:000005">
    <property type="entry name" value="50S ribosomal protein L1"/>
    <property type="match status" value="1"/>
</dbReference>
<dbReference type="Gene3D" id="3.30.190.20">
    <property type="match status" value="1"/>
</dbReference>
<dbReference type="Gene3D" id="3.40.50.790">
    <property type="match status" value="1"/>
</dbReference>
<dbReference type="HAMAP" id="MF_01318_A">
    <property type="entry name" value="Ribosomal_uL1_A"/>
    <property type="match status" value="1"/>
</dbReference>
<dbReference type="InterPro" id="IPR002143">
    <property type="entry name" value="Ribosomal_uL1"/>
</dbReference>
<dbReference type="InterPro" id="IPR023674">
    <property type="entry name" value="Ribosomal_uL1-like"/>
</dbReference>
<dbReference type="InterPro" id="IPR028364">
    <property type="entry name" value="Ribosomal_uL1/biogenesis"/>
</dbReference>
<dbReference type="InterPro" id="IPR016095">
    <property type="entry name" value="Ribosomal_uL1_3-a/b-sand"/>
</dbReference>
<dbReference type="InterPro" id="IPR023669">
    <property type="entry name" value="Ribosomal_uL1_arc"/>
</dbReference>
<dbReference type="InterPro" id="IPR023673">
    <property type="entry name" value="Ribosomal_uL1_CS"/>
</dbReference>
<dbReference type="NCBIfam" id="NF003244">
    <property type="entry name" value="PRK04203.1"/>
    <property type="match status" value="1"/>
</dbReference>
<dbReference type="PANTHER" id="PTHR36427">
    <property type="entry name" value="54S RIBOSOMAL PROTEIN L1, MITOCHONDRIAL"/>
    <property type="match status" value="1"/>
</dbReference>
<dbReference type="PANTHER" id="PTHR36427:SF3">
    <property type="entry name" value="LARGE RIBOSOMAL SUBUNIT PROTEIN UL1M"/>
    <property type="match status" value="1"/>
</dbReference>
<dbReference type="Pfam" id="PF00687">
    <property type="entry name" value="Ribosomal_L1"/>
    <property type="match status" value="1"/>
</dbReference>
<dbReference type="PIRSF" id="PIRSF002155">
    <property type="entry name" value="Ribosomal_L1"/>
    <property type="match status" value="1"/>
</dbReference>
<dbReference type="SUPFAM" id="SSF56808">
    <property type="entry name" value="Ribosomal protein L1"/>
    <property type="match status" value="1"/>
</dbReference>
<dbReference type="PROSITE" id="PS01199">
    <property type="entry name" value="RIBOSOMAL_L1"/>
    <property type="match status" value="1"/>
</dbReference>
<reference key="1">
    <citation type="submission" date="2006-12" db="EMBL/GenBank/DDBJ databases">
        <title>Complete sequence of Pyrobaculum islandicum DSM 4184.</title>
        <authorList>
            <person name="Copeland A."/>
            <person name="Lucas S."/>
            <person name="Lapidus A."/>
            <person name="Barry K."/>
            <person name="Detter J.C."/>
            <person name="Glavina del Rio T."/>
            <person name="Dalin E."/>
            <person name="Tice H."/>
            <person name="Pitluck S."/>
            <person name="Meincke L."/>
            <person name="Brettin T."/>
            <person name="Bruce D."/>
            <person name="Han C."/>
            <person name="Tapia R."/>
            <person name="Gilna P."/>
            <person name="Schmutz J."/>
            <person name="Larimer F."/>
            <person name="Land M."/>
            <person name="Hauser L."/>
            <person name="Kyrpides N."/>
            <person name="Mikhailova N."/>
            <person name="Cozen A.E."/>
            <person name="Fitz-Gibbon S.T."/>
            <person name="House C.H."/>
            <person name="Saltikov C."/>
            <person name="Lowe T."/>
            <person name="Richardson P."/>
        </authorList>
    </citation>
    <scope>NUCLEOTIDE SEQUENCE [LARGE SCALE GENOMIC DNA]</scope>
    <source>
        <strain>DSM 4184 / JCM 9189 / GEO3</strain>
    </source>
</reference>
<gene>
    <name evidence="1" type="primary">rpl1</name>
    <name type="ordered locus">Pisl_0465</name>
</gene>
<protein>
    <recommendedName>
        <fullName evidence="1">Large ribosomal subunit protein uL1</fullName>
    </recommendedName>
    <alternativeName>
        <fullName evidence="2">50S ribosomal protein L1</fullName>
    </alternativeName>
</protein>
<organism>
    <name type="scientific">Pyrobaculum islandicum (strain DSM 4184 / JCM 9189 / GEO3)</name>
    <dbReference type="NCBI Taxonomy" id="384616"/>
    <lineage>
        <taxon>Archaea</taxon>
        <taxon>Thermoproteota</taxon>
        <taxon>Thermoprotei</taxon>
        <taxon>Thermoproteales</taxon>
        <taxon>Thermoproteaceae</taxon>
        <taxon>Pyrobaculum</taxon>
    </lineage>
</organism>
<accession>A1RRR1</accession>
<name>RL1_PYRIL</name>
<proteinExistence type="inferred from homology"/>
<feature type="chain" id="PRO_0000308154" description="Large ribosomal subunit protein uL1">
    <location>
        <begin position="1"/>
        <end position="222"/>
    </location>
</feature>
<evidence type="ECO:0000255" key="1">
    <source>
        <dbReference type="HAMAP-Rule" id="MF_01318"/>
    </source>
</evidence>
<evidence type="ECO:0000305" key="2"/>